<reference key="1">
    <citation type="journal article" date="2007" name="DNA Res.">
        <title>Complete genomic structure of the bloom-forming toxic cyanobacterium Microcystis aeruginosa NIES-843.</title>
        <authorList>
            <person name="Kaneko T."/>
            <person name="Nakajima N."/>
            <person name="Okamoto S."/>
            <person name="Suzuki I."/>
            <person name="Tanabe Y."/>
            <person name="Tamaoki M."/>
            <person name="Nakamura Y."/>
            <person name="Kasai F."/>
            <person name="Watanabe A."/>
            <person name="Kawashima K."/>
            <person name="Kishida Y."/>
            <person name="Ono A."/>
            <person name="Shimizu Y."/>
            <person name="Takahashi C."/>
            <person name="Minami C."/>
            <person name="Fujishiro T."/>
            <person name="Kohara M."/>
            <person name="Katoh M."/>
            <person name="Nakazaki N."/>
            <person name="Nakayama S."/>
            <person name="Yamada M."/>
            <person name="Tabata S."/>
            <person name="Watanabe M.M."/>
        </authorList>
    </citation>
    <scope>NUCLEOTIDE SEQUENCE [LARGE SCALE GENOMIC DNA]</scope>
    <source>
        <strain>NIES-843 / IAM M-247</strain>
    </source>
</reference>
<sequence>METALLLAKLPEAYQIFDPLVDVLPLIPLFFLLLAFVWQASVGFK</sequence>
<gene>
    <name evidence="1" type="primary">psbK</name>
    <name type="ordered locus">MAE_11900</name>
</gene>
<organism>
    <name type="scientific">Microcystis aeruginosa (strain NIES-843 / IAM M-2473)</name>
    <dbReference type="NCBI Taxonomy" id="449447"/>
    <lineage>
        <taxon>Bacteria</taxon>
        <taxon>Bacillati</taxon>
        <taxon>Cyanobacteriota</taxon>
        <taxon>Cyanophyceae</taxon>
        <taxon>Oscillatoriophycideae</taxon>
        <taxon>Chroococcales</taxon>
        <taxon>Microcystaceae</taxon>
        <taxon>Microcystis</taxon>
    </lineage>
</organism>
<protein>
    <recommendedName>
        <fullName evidence="1">Photosystem II reaction center protein K</fullName>
        <shortName evidence="1">PSII-K</shortName>
    </recommendedName>
</protein>
<proteinExistence type="inferred from homology"/>
<keyword id="KW-0472">Membrane</keyword>
<keyword id="KW-0602">Photosynthesis</keyword>
<keyword id="KW-0604">Photosystem II</keyword>
<keyword id="KW-0674">Reaction center</keyword>
<keyword id="KW-0793">Thylakoid</keyword>
<keyword id="KW-0812">Transmembrane</keyword>
<keyword id="KW-1133">Transmembrane helix</keyword>
<accession>B0JSW8</accession>
<feature type="propeptide" id="PRO_1000080860" evidence="1">
    <location>
        <begin position="1"/>
        <end position="8"/>
    </location>
</feature>
<feature type="chain" id="PRO_1000080861" description="Photosystem II reaction center protein K" evidence="1">
    <location>
        <begin position="9"/>
        <end position="45"/>
    </location>
</feature>
<feature type="transmembrane region" description="Helical" evidence="1">
    <location>
        <begin position="24"/>
        <end position="44"/>
    </location>
</feature>
<dbReference type="EMBL" id="AP009552">
    <property type="protein sequence ID" value="BAG01012.1"/>
    <property type="molecule type" value="Genomic_DNA"/>
</dbReference>
<dbReference type="RefSeq" id="WP_008206475.1">
    <property type="nucleotide sequence ID" value="NC_010296.1"/>
</dbReference>
<dbReference type="SMR" id="B0JSW8"/>
<dbReference type="STRING" id="449447.MAE_11900"/>
<dbReference type="PaxDb" id="449447-MAE_11900"/>
<dbReference type="EnsemblBacteria" id="BAG01012">
    <property type="protein sequence ID" value="BAG01012"/>
    <property type="gene ID" value="MAE_11900"/>
</dbReference>
<dbReference type="KEGG" id="mar:MAE_11900"/>
<dbReference type="eggNOG" id="ENOG5032YQR">
    <property type="taxonomic scope" value="Bacteria"/>
</dbReference>
<dbReference type="HOGENOM" id="CLU_174355_0_0_3"/>
<dbReference type="BioCyc" id="MAER449447:MAE_RS05255-MONOMER"/>
<dbReference type="Proteomes" id="UP000001510">
    <property type="component" value="Chromosome"/>
</dbReference>
<dbReference type="GO" id="GO:0009539">
    <property type="term" value="C:photosystem II reaction center"/>
    <property type="evidence" value="ECO:0007669"/>
    <property type="project" value="InterPro"/>
</dbReference>
<dbReference type="GO" id="GO:0031676">
    <property type="term" value="C:plasma membrane-derived thylakoid membrane"/>
    <property type="evidence" value="ECO:0007669"/>
    <property type="project" value="UniProtKB-SubCell"/>
</dbReference>
<dbReference type="GO" id="GO:0015979">
    <property type="term" value="P:photosynthesis"/>
    <property type="evidence" value="ECO:0007669"/>
    <property type="project" value="UniProtKB-UniRule"/>
</dbReference>
<dbReference type="HAMAP" id="MF_00441">
    <property type="entry name" value="PSII_PsbK"/>
    <property type="match status" value="1"/>
</dbReference>
<dbReference type="InterPro" id="IPR003687">
    <property type="entry name" value="PSII_PsbK"/>
</dbReference>
<dbReference type="InterPro" id="IPR037270">
    <property type="entry name" value="PSII_PsbK_sf"/>
</dbReference>
<dbReference type="NCBIfam" id="NF002715">
    <property type="entry name" value="PRK02553.1"/>
    <property type="match status" value="1"/>
</dbReference>
<dbReference type="PANTHER" id="PTHR35325">
    <property type="match status" value="1"/>
</dbReference>
<dbReference type="PANTHER" id="PTHR35325:SF1">
    <property type="entry name" value="PHOTOSYSTEM II REACTION CENTER PROTEIN K"/>
    <property type="match status" value="1"/>
</dbReference>
<dbReference type="Pfam" id="PF02533">
    <property type="entry name" value="PsbK"/>
    <property type="match status" value="1"/>
</dbReference>
<dbReference type="SUPFAM" id="SSF161037">
    <property type="entry name" value="Photosystem II reaction center protein K, PsbK"/>
    <property type="match status" value="1"/>
</dbReference>
<name>PSBK_MICAN</name>
<evidence type="ECO:0000255" key="1">
    <source>
        <dbReference type="HAMAP-Rule" id="MF_00441"/>
    </source>
</evidence>
<comment type="function">
    <text evidence="1">One of the components of the core complex of photosystem II (PSII). PSII is a light-driven water:plastoquinone oxidoreductase that uses light energy to abstract electrons from H(2)O, generating O(2) and a proton gradient subsequently used for ATP formation. It consists of a core antenna complex that captures photons, and an electron transfer chain that converts photonic excitation into a charge separation.</text>
</comment>
<comment type="subunit">
    <text evidence="1">PSII is composed of 1 copy each of membrane proteins PsbA, PsbB, PsbC, PsbD, PsbE, PsbF, PsbH, PsbI, PsbJ, PsbK, PsbL, PsbM, PsbT, PsbX, PsbY, PsbZ, Psb30/Ycf12, peripheral proteins PsbO, CyanoQ (PsbQ), PsbU, PsbV and a large number of cofactors. It forms dimeric complexes.</text>
</comment>
<comment type="subcellular location">
    <subcellularLocation>
        <location evidence="1">Cellular thylakoid membrane</location>
        <topology evidence="1">Single-pass membrane protein</topology>
    </subcellularLocation>
</comment>
<comment type="similarity">
    <text evidence="1">Belongs to the PsbK family.</text>
</comment>